<name>MURC_STAAR</name>
<organism>
    <name type="scientific">Staphylococcus aureus (strain MRSA252)</name>
    <dbReference type="NCBI Taxonomy" id="282458"/>
    <lineage>
        <taxon>Bacteria</taxon>
        <taxon>Bacillati</taxon>
        <taxon>Bacillota</taxon>
        <taxon>Bacilli</taxon>
        <taxon>Bacillales</taxon>
        <taxon>Staphylococcaceae</taxon>
        <taxon>Staphylococcus</taxon>
    </lineage>
</organism>
<evidence type="ECO:0000255" key="1">
    <source>
        <dbReference type="HAMAP-Rule" id="MF_00046"/>
    </source>
</evidence>
<accession>Q6GFW8</accession>
<comment type="function">
    <text evidence="1">Cell wall formation.</text>
</comment>
<comment type="catalytic activity">
    <reaction evidence="1">
        <text>UDP-N-acetyl-alpha-D-muramate + L-alanine + ATP = UDP-N-acetyl-alpha-D-muramoyl-L-alanine + ADP + phosphate + H(+)</text>
        <dbReference type="Rhea" id="RHEA:23372"/>
        <dbReference type="ChEBI" id="CHEBI:15378"/>
        <dbReference type="ChEBI" id="CHEBI:30616"/>
        <dbReference type="ChEBI" id="CHEBI:43474"/>
        <dbReference type="ChEBI" id="CHEBI:57972"/>
        <dbReference type="ChEBI" id="CHEBI:70757"/>
        <dbReference type="ChEBI" id="CHEBI:83898"/>
        <dbReference type="ChEBI" id="CHEBI:456216"/>
        <dbReference type="EC" id="6.3.2.8"/>
    </reaction>
</comment>
<comment type="pathway">
    <text evidence="1">Cell wall biogenesis; peptidoglycan biosynthesis.</text>
</comment>
<comment type="subcellular location">
    <subcellularLocation>
        <location evidence="1">Cytoplasm</location>
    </subcellularLocation>
</comment>
<comment type="similarity">
    <text evidence="1">Belongs to the MurCDEF family.</text>
</comment>
<sequence>MTHYHFVGIKGSGMSSLAQIMHDLGHEVQGSDIENYVFTEVALRNKGIKILPFDANNIKEDMVVIQGNAFASSHEEIVRAHQLKLDVVSYNDFLGQIIDQYTSVAVTGAHGKTSTTGLLSHVMNGDKKTSFLIGDGTGMGLPESDYFAFEACEYRRHFLSYKPDYAIMTNIDFDHPDYFKDINDVFDAFQEMAHNVKKGIIAWGDDEHLRKIEADVPIYYYGFKESDDIYAQNIQITDKGTAFDVYVDGEFYDHFLSPQYGDHTVLNALAVIAISYLEKLDVTNIKEALETFGGVKRRFNETTIANQVIVDDYAHHPREISATIETARKKYPHKEVVAVFQPHTFSRTQAFLNEFAESLSKADRVFLCEIFGSIRENTGALTIQDLIDKIEGASLINEDSINVLEQFDNAVILFMGAGDIQKLQNAYLDKLGMKNAF</sequence>
<reference key="1">
    <citation type="journal article" date="2004" name="Proc. Natl. Acad. Sci. U.S.A.">
        <title>Complete genomes of two clinical Staphylococcus aureus strains: evidence for the rapid evolution of virulence and drug resistance.</title>
        <authorList>
            <person name="Holden M.T.G."/>
            <person name="Feil E.J."/>
            <person name="Lindsay J.A."/>
            <person name="Peacock S.J."/>
            <person name="Day N.P.J."/>
            <person name="Enright M.C."/>
            <person name="Foster T.J."/>
            <person name="Moore C.E."/>
            <person name="Hurst L."/>
            <person name="Atkin R."/>
            <person name="Barron A."/>
            <person name="Bason N."/>
            <person name="Bentley S.D."/>
            <person name="Chillingworth C."/>
            <person name="Chillingworth T."/>
            <person name="Churcher C."/>
            <person name="Clark L."/>
            <person name="Corton C."/>
            <person name="Cronin A."/>
            <person name="Doggett J."/>
            <person name="Dowd L."/>
            <person name="Feltwell T."/>
            <person name="Hance Z."/>
            <person name="Harris B."/>
            <person name="Hauser H."/>
            <person name="Holroyd S."/>
            <person name="Jagels K."/>
            <person name="James K.D."/>
            <person name="Lennard N."/>
            <person name="Line A."/>
            <person name="Mayes R."/>
            <person name="Moule S."/>
            <person name="Mungall K."/>
            <person name="Ormond D."/>
            <person name="Quail M.A."/>
            <person name="Rabbinowitsch E."/>
            <person name="Rutherford K.M."/>
            <person name="Sanders M."/>
            <person name="Sharp S."/>
            <person name="Simmonds M."/>
            <person name="Stevens K."/>
            <person name="Whitehead S."/>
            <person name="Barrell B.G."/>
            <person name="Spratt B.G."/>
            <person name="Parkhill J."/>
        </authorList>
    </citation>
    <scope>NUCLEOTIDE SEQUENCE [LARGE SCALE GENOMIC DNA]</scope>
    <source>
        <strain>MRSA252</strain>
    </source>
</reference>
<protein>
    <recommendedName>
        <fullName evidence="1">UDP-N-acetylmuramate--L-alanine ligase</fullName>
        <ecNumber evidence="1">6.3.2.8</ecNumber>
    </recommendedName>
    <alternativeName>
        <fullName evidence="1">UDP-N-acetylmuramoyl-L-alanine synthetase</fullName>
    </alternativeName>
</protein>
<feature type="chain" id="PRO_0000182155" description="UDP-N-acetylmuramate--L-alanine ligase">
    <location>
        <begin position="1"/>
        <end position="437"/>
    </location>
</feature>
<feature type="binding site" evidence="1">
    <location>
        <begin position="108"/>
        <end position="114"/>
    </location>
    <ligand>
        <name>ATP</name>
        <dbReference type="ChEBI" id="CHEBI:30616"/>
    </ligand>
</feature>
<proteinExistence type="inferred from homology"/>
<gene>
    <name evidence="1" type="primary">murC</name>
    <name type="ordered locus">SAR1818</name>
</gene>
<dbReference type="EC" id="6.3.2.8" evidence="1"/>
<dbReference type="EMBL" id="BX571856">
    <property type="protein sequence ID" value="CAG40809.1"/>
    <property type="molecule type" value="Genomic_DNA"/>
</dbReference>
<dbReference type="RefSeq" id="WP_000150173.1">
    <property type="nucleotide sequence ID" value="NC_002952.2"/>
</dbReference>
<dbReference type="SMR" id="Q6GFW8"/>
<dbReference type="KEGG" id="sar:SAR1818"/>
<dbReference type="HOGENOM" id="CLU_028104_1_0_9"/>
<dbReference type="UniPathway" id="UPA00219"/>
<dbReference type="Proteomes" id="UP000000596">
    <property type="component" value="Chromosome"/>
</dbReference>
<dbReference type="GO" id="GO:0005737">
    <property type="term" value="C:cytoplasm"/>
    <property type="evidence" value="ECO:0007669"/>
    <property type="project" value="UniProtKB-SubCell"/>
</dbReference>
<dbReference type="GO" id="GO:0005524">
    <property type="term" value="F:ATP binding"/>
    <property type="evidence" value="ECO:0007669"/>
    <property type="project" value="UniProtKB-UniRule"/>
</dbReference>
<dbReference type="GO" id="GO:0008763">
    <property type="term" value="F:UDP-N-acetylmuramate-L-alanine ligase activity"/>
    <property type="evidence" value="ECO:0007669"/>
    <property type="project" value="UniProtKB-UniRule"/>
</dbReference>
<dbReference type="GO" id="GO:0051301">
    <property type="term" value="P:cell division"/>
    <property type="evidence" value="ECO:0007669"/>
    <property type="project" value="UniProtKB-KW"/>
</dbReference>
<dbReference type="GO" id="GO:0071555">
    <property type="term" value="P:cell wall organization"/>
    <property type="evidence" value="ECO:0007669"/>
    <property type="project" value="UniProtKB-KW"/>
</dbReference>
<dbReference type="GO" id="GO:0009252">
    <property type="term" value="P:peptidoglycan biosynthetic process"/>
    <property type="evidence" value="ECO:0007669"/>
    <property type="project" value="UniProtKB-UniRule"/>
</dbReference>
<dbReference type="GO" id="GO:0008360">
    <property type="term" value="P:regulation of cell shape"/>
    <property type="evidence" value="ECO:0007669"/>
    <property type="project" value="UniProtKB-KW"/>
</dbReference>
<dbReference type="Gene3D" id="3.90.190.20">
    <property type="entry name" value="Mur ligase, C-terminal domain"/>
    <property type="match status" value="1"/>
</dbReference>
<dbReference type="Gene3D" id="3.40.1190.10">
    <property type="entry name" value="Mur-like, catalytic domain"/>
    <property type="match status" value="1"/>
</dbReference>
<dbReference type="Gene3D" id="3.40.50.720">
    <property type="entry name" value="NAD(P)-binding Rossmann-like Domain"/>
    <property type="match status" value="1"/>
</dbReference>
<dbReference type="HAMAP" id="MF_00046">
    <property type="entry name" value="MurC"/>
    <property type="match status" value="1"/>
</dbReference>
<dbReference type="InterPro" id="IPR036565">
    <property type="entry name" value="Mur-like_cat_sf"/>
</dbReference>
<dbReference type="InterPro" id="IPR004101">
    <property type="entry name" value="Mur_ligase_C"/>
</dbReference>
<dbReference type="InterPro" id="IPR036615">
    <property type="entry name" value="Mur_ligase_C_dom_sf"/>
</dbReference>
<dbReference type="InterPro" id="IPR013221">
    <property type="entry name" value="Mur_ligase_cen"/>
</dbReference>
<dbReference type="InterPro" id="IPR000713">
    <property type="entry name" value="Mur_ligase_N"/>
</dbReference>
<dbReference type="InterPro" id="IPR050061">
    <property type="entry name" value="MurCDEF_pg_biosynth"/>
</dbReference>
<dbReference type="InterPro" id="IPR005758">
    <property type="entry name" value="UDP-N-AcMur_Ala_ligase_MurC"/>
</dbReference>
<dbReference type="NCBIfam" id="TIGR01082">
    <property type="entry name" value="murC"/>
    <property type="match status" value="1"/>
</dbReference>
<dbReference type="PANTHER" id="PTHR43445:SF3">
    <property type="entry name" value="UDP-N-ACETYLMURAMATE--L-ALANINE LIGASE"/>
    <property type="match status" value="1"/>
</dbReference>
<dbReference type="PANTHER" id="PTHR43445">
    <property type="entry name" value="UDP-N-ACETYLMURAMATE--L-ALANINE LIGASE-RELATED"/>
    <property type="match status" value="1"/>
</dbReference>
<dbReference type="Pfam" id="PF01225">
    <property type="entry name" value="Mur_ligase"/>
    <property type="match status" value="1"/>
</dbReference>
<dbReference type="Pfam" id="PF02875">
    <property type="entry name" value="Mur_ligase_C"/>
    <property type="match status" value="1"/>
</dbReference>
<dbReference type="Pfam" id="PF08245">
    <property type="entry name" value="Mur_ligase_M"/>
    <property type="match status" value="1"/>
</dbReference>
<dbReference type="SUPFAM" id="SSF51984">
    <property type="entry name" value="MurCD N-terminal domain"/>
    <property type="match status" value="1"/>
</dbReference>
<dbReference type="SUPFAM" id="SSF53623">
    <property type="entry name" value="MurD-like peptide ligases, catalytic domain"/>
    <property type="match status" value="1"/>
</dbReference>
<dbReference type="SUPFAM" id="SSF53244">
    <property type="entry name" value="MurD-like peptide ligases, peptide-binding domain"/>
    <property type="match status" value="1"/>
</dbReference>
<keyword id="KW-0067">ATP-binding</keyword>
<keyword id="KW-0131">Cell cycle</keyword>
<keyword id="KW-0132">Cell division</keyword>
<keyword id="KW-0133">Cell shape</keyword>
<keyword id="KW-0961">Cell wall biogenesis/degradation</keyword>
<keyword id="KW-0963">Cytoplasm</keyword>
<keyword id="KW-0436">Ligase</keyword>
<keyword id="KW-0547">Nucleotide-binding</keyword>
<keyword id="KW-0573">Peptidoglycan synthesis</keyword>